<protein>
    <recommendedName>
        <fullName>Neutrophil defensin 1</fullName>
    </recommendedName>
    <alternativeName>
        <fullName>RMAD-1</fullName>
    </alternativeName>
</protein>
<evidence type="ECO:0000250" key="1"/>
<evidence type="ECO:0000250" key="2">
    <source>
        <dbReference type="UniProtKB" id="P59665"/>
    </source>
</evidence>
<evidence type="ECO:0000255" key="3"/>
<evidence type="ECO:0000269" key="4">
    <source>
    </source>
</evidence>
<evidence type="ECO:0000305" key="5"/>
<dbReference type="EMBL" id="AF188268">
    <property type="protein sequence ID" value="AAF06312.1"/>
    <property type="molecule type" value="mRNA"/>
</dbReference>
<dbReference type="PIR" id="A59076">
    <property type="entry name" value="A59076"/>
</dbReference>
<dbReference type="RefSeq" id="XP_015000177.1">
    <property type="nucleotide sequence ID" value="XM_015144691.2"/>
</dbReference>
<dbReference type="FunCoup" id="P60030">
    <property type="interactions" value="414"/>
</dbReference>
<dbReference type="STRING" id="9544.ENSMMUP00000024362"/>
<dbReference type="PaxDb" id="9544-ENSMMUP00000024362"/>
<dbReference type="Ensembl" id="ENSMMUT00000026035.4">
    <property type="protein sequence ID" value="ENSMMUP00000024362.4"/>
    <property type="gene ID" value="ENSMMUG00000018517.4"/>
</dbReference>
<dbReference type="GeneID" id="574196"/>
<dbReference type="CTD" id="728358"/>
<dbReference type="VEuPathDB" id="HostDB:ENSMMUG00000018517"/>
<dbReference type="eggNOG" id="ENOG502T2EX">
    <property type="taxonomic scope" value="Eukaryota"/>
</dbReference>
<dbReference type="GeneTree" id="ENSGT00940000153268"/>
<dbReference type="HOGENOM" id="CLU_160803_0_0_1"/>
<dbReference type="InParanoid" id="P60030"/>
<dbReference type="OMA" id="LRKNMAC"/>
<dbReference type="OrthoDB" id="9530339at2759"/>
<dbReference type="TreeFam" id="TF338414"/>
<dbReference type="Proteomes" id="UP000006718">
    <property type="component" value="Chromosome 8"/>
</dbReference>
<dbReference type="Bgee" id="ENSMMUG00000018517">
    <property type="expression patterns" value="Expressed in spleen and 15 other cell types or tissues"/>
</dbReference>
<dbReference type="GO" id="GO:0005615">
    <property type="term" value="C:extracellular space"/>
    <property type="evidence" value="ECO:0000318"/>
    <property type="project" value="GO_Central"/>
</dbReference>
<dbReference type="GO" id="GO:0019731">
    <property type="term" value="P:antibacterial humoral response"/>
    <property type="evidence" value="ECO:0000318"/>
    <property type="project" value="GO_Central"/>
</dbReference>
<dbReference type="GO" id="GO:0061844">
    <property type="term" value="P:antimicrobial humoral immune response mediated by antimicrobial peptide"/>
    <property type="evidence" value="ECO:0000318"/>
    <property type="project" value="GO_Central"/>
</dbReference>
<dbReference type="GO" id="GO:0071222">
    <property type="term" value="P:cellular response to lipopolysaccharide"/>
    <property type="evidence" value="ECO:0000318"/>
    <property type="project" value="GO_Central"/>
</dbReference>
<dbReference type="GO" id="GO:0050832">
    <property type="term" value="P:defense response to fungus"/>
    <property type="evidence" value="ECO:0007669"/>
    <property type="project" value="UniProtKB-KW"/>
</dbReference>
<dbReference type="GO" id="GO:0050829">
    <property type="term" value="P:defense response to Gram-negative bacterium"/>
    <property type="evidence" value="ECO:0000318"/>
    <property type="project" value="GO_Central"/>
</dbReference>
<dbReference type="GO" id="GO:0050830">
    <property type="term" value="P:defense response to Gram-positive bacterium"/>
    <property type="evidence" value="ECO:0000318"/>
    <property type="project" value="GO_Central"/>
</dbReference>
<dbReference type="GO" id="GO:0051673">
    <property type="term" value="P:disruption of plasma membrane integrity in another organism"/>
    <property type="evidence" value="ECO:0000318"/>
    <property type="project" value="GO_Central"/>
</dbReference>
<dbReference type="GO" id="GO:0002227">
    <property type="term" value="P:innate immune response in mucosa"/>
    <property type="evidence" value="ECO:0000318"/>
    <property type="project" value="GO_Central"/>
</dbReference>
<dbReference type="GO" id="GO:0031640">
    <property type="term" value="P:killing of cells of another organism"/>
    <property type="evidence" value="ECO:0007669"/>
    <property type="project" value="UniProtKB-KW"/>
</dbReference>
<dbReference type="InterPro" id="IPR016327">
    <property type="entry name" value="Alpha-defensin"/>
</dbReference>
<dbReference type="InterPro" id="IPR006081">
    <property type="entry name" value="Alpha-defensin_C"/>
</dbReference>
<dbReference type="InterPro" id="IPR002366">
    <property type="entry name" value="Alpha-defensin_N"/>
</dbReference>
<dbReference type="InterPro" id="IPR006080">
    <property type="entry name" value="Beta/alpha-defensin_C"/>
</dbReference>
<dbReference type="PANTHER" id="PTHR11876">
    <property type="entry name" value="ALPHA-DEFENSIN 1"/>
    <property type="match status" value="1"/>
</dbReference>
<dbReference type="PANTHER" id="PTHR11876:SF19">
    <property type="entry name" value="NEUTROPHIL DEFENSIN 1-RELATED"/>
    <property type="match status" value="1"/>
</dbReference>
<dbReference type="Pfam" id="PF00323">
    <property type="entry name" value="Defensin_1"/>
    <property type="match status" value="1"/>
</dbReference>
<dbReference type="Pfam" id="PF00879">
    <property type="entry name" value="Defensin_propep"/>
    <property type="match status" value="1"/>
</dbReference>
<dbReference type="PIRSF" id="PIRSF001875">
    <property type="entry name" value="Alpha-defensin"/>
    <property type="match status" value="1"/>
</dbReference>
<dbReference type="SMART" id="SM01418">
    <property type="entry name" value="Defensin_propep"/>
    <property type="match status" value="1"/>
</dbReference>
<dbReference type="SMART" id="SM00048">
    <property type="entry name" value="DEFSN"/>
    <property type="match status" value="1"/>
</dbReference>
<dbReference type="SUPFAM" id="SSF57392">
    <property type="entry name" value="Defensin-like"/>
    <property type="match status" value="1"/>
</dbReference>
<dbReference type="PROSITE" id="PS00269">
    <property type="entry name" value="DEFENSIN"/>
    <property type="match status" value="1"/>
</dbReference>
<name>DEF1_MACMU</name>
<keyword id="KW-0044">Antibiotic</keyword>
<keyword id="KW-0929">Antimicrobial</keyword>
<keyword id="KW-0211">Defensin</keyword>
<keyword id="KW-0903">Direct protein sequencing</keyword>
<keyword id="KW-1015">Disulfide bond</keyword>
<keyword id="KW-0295">Fungicide</keyword>
<keyword id="KW-0597">Phosphoprotein</keyword>
<keyword id="KW-1185">Reference proteome</keyword>
<keyword id="KW-0964">Secreted</keyword>
<keyword id="KW-0732">Signal</keyword>
<accession>P60030</accession>
<accession>P82318</accession>
<comment type="function">
    <text evidence="2">Effector molecule of the innate immune system that acts via antibiotic-like properties against a broad array of infectious agents including bacteria, fungi, and viruses or by promoting the activation and maturation of some APCs. Interacts with the essential precursor of cell wall synthesis lipid II to inhibit bacterial cell wall synthesis. Inhibits adenovirus infection via inhibition of viral disassembly at the vertex region, thereby restricting the release of internal capsid protein pVI, which is required for endosomal membrane penetration during cell entry. In addition, interaction with adenovirus capsid leads to the redirection of viral particles to TLR4 thereby promoting a NLRP3-mediated inflammasome response and interleukin 1-beta (IL-1beta) release. Induces the production of proinflammatory cytokines including type I interferon (IFN) in plasmacytoid dendritic cells (pDCs) by triggering the degradation of NFKBIA and nuclear translocation of IRF1, both of which are required for activation of pDCs.</text>
</comment>
<comment type="subunit">
    <text evidence="2">Tetramer. Dimer. Interacts with RETN.</text>
</comment>
<comment type="subcellular location">
    <subcellularLocation>
        <location>Secreted</location>
    </subcellularLocation>
</comment>
<comment type="PTM">
    <text evidence="2">ADP-ribosylation drastically reduces cytotoxic and antibacterial activities, and enhances IL8 production.</text>
</comment>
<comment type="mass spectrometry" mass="3446.9" method="MALDI" evidence="4"/>
<comment type="similarity">
    <text evidence="5">Belongs to the alpha-defensin family.</text>
</comment>
<reference key="1">
    <citation type="journal article" date="1999" name="Infect. Immun.">
        <title>Isolation, characterization, cDNA cloning, and antimicrobial properties of two distinct subfamilies of alpha-defensins from rhesus macaque leukocytes.</title>
        <authorList>
            <person name="Tang Y.Q."/>
            <person name="Yuan J."/>
            <person name="Miller C.J."/>
            <person name="Selsted M.E."/>
        </authorList>
    </citation>
    <scope>NUCLEOTIDE SEQUENCE [MRNA]</scope>
    <scope>PROTEIN SEQUENCE OF 67-96</scope>
    <scope>MASS SPECTROMETRY</scope>
    <source>
        <tissue>Bone marrow</tissue>
        <tissue>Leukocyte</tissue>
    </source>
</reference>
<feature type="signal peptide" evidence="3">
    <location>
        <begin position="1"/>
        <end position="19"/>
    </location>
</feature>
<feature type="propeptide" id="PRO_0000006795" evidence="4">
    <location>
        <begin position="20"/>
        <end position="66"/>
    </location>
</feature>
<feature type="peptide" id="PRO_0000006796" description="Neutrophil defensin 1">
    <location>
        <begin position="67"/>
        <end position="96"/>
    </location>
</feature>
<feature type="modified residue" description="Phosphotyrosine" evidence="2">
    <location>
        <position position="87"/>
    </location>
</feature>
<feature type="disulfide bond" evidence="1">
    <location>
        <begin position="68"/>
        <end position="96"/>
    </location>
</feature>
<feature type="disulfide bond" evidence="1">
    <location>
        <begin position="70"/>
        <end position="85"/>
    </location>
</feature>
<feature type="disulfide bond" evidence="1">
    <location>
        <begin position="75"/>
        <end position="95"/>
    </location>
</feature>
<sequence length="96" mass="10544">MRTLVILAAILLVALQAQAEPLQARTDEATAAQEQIPTDNPEVVVSLAWDESLAPKDSVPGLRKNMACYCRIPACLAGERRYGTCFYLGRVWAFCC</sequence>
<proteinExistence type="evidence at protein level"/>
<organism>
    <name type="scientific">Macaca mulatta</name>
    <name type="common">Rhesus macaque</name>
    <dbReference type="NCBI Taxonomy" id="9544"/>
    <lineage>
        <taxon>Eukaryota</taxon>
        <taxon>Metazoa</taxon>
        <taxon>Chordata</taxon>
        <taxon>Craniata</taxon>
        <taxon>Vertebrata</taxon>
        <taxon>Euteleostomi</taxon>
        <taxon>Mammalia</taxon>
        <taxon>Eutheria</taxon>
        <taxon>Euarchontoglires</taxon>
        <taxon>Primates</taxon>
        <taxon>Haplorrhini</taxon>
        <taxon>Catarrhini</taxon>
        <taxon>Cercopithecidae</taxon>
        <taxon>Cercopithecinae</taxon>
        <taxon>Macaca</taxon>
    </lineage>
</organism>